<organism>
    <name type="scientific">Arabidopsis thaliana</name>
    <name type="common">Mouse-ear cress</name>
    <dbReference type="NCBI Taxonomy" id="3702"/>
    <lineage>
        <taxon>Eukaryota</taxon>
        <taxon>Viridiplantae</taxon>
        <taxon>Streptophyta</taxon>
        <taxon>Embryophyta</taxon>
        <taxon>Tracheophyta</taxon>
        <taxon>Spermatophyta</taxon>
        <taxon>Magnoliopsida</taxon>
        <taxon>eudicotyledons</taxon>
        <taxon>Gunneridae</taxon>
        <taxon>Pentapetalae</taxon>
        <taxon>rosids</taxon>
        <taxon>malvids</taxon>
        <taxon>Brassicales</taxon>
        <taxon>Brassicaceae</taxon>
        <taxon>Camelineae</taxon>
        <taxon>Arabidopsis</taxon>
    </lineage>
</organism>
<feature type="signal peptide" evidence="2">
    <location>
        <begin position="1"/>
        <end position="24"/>
    </location>
</feature>
<feature type="chain" id="PRO_0000269035" description="Lysine-rich arabinogalactan protein 19">
    <location>
        <begin position="25"/>
        <end position="196"/>
    </location>
</feature>
<feature type="propeptide" id="PRO_0000269036" description="Removed in mature form" evidence="2">
    <location>
        <begin position="197"/>
        <end position="248"/>
    </location>
</feature>
<feature type="region of interest" description="Disordered" evidence="3">
    <location>
        <begin position="25"/>
        <end position="221"/>
    </location>
</feature>
<feature type="compositionally biased region" description="Low complexity" evidence="3">
    <location>
        <begin position="25"/>
        <end position="37"/>
    </location>
</feature>
<feature type="compositionally biased region" description="Pro residues" evidence="3">
    <location>
        <begin position="38"/>
        <end position="57"/>
    </location>
</feature>
<feature type="compositionally biased region" description="Pro residues" evidence="3">
    <location>
        <begin position="67"/>
        <end position="86"/>
    </location>
</feature>
<feature type="compositionally biased region" description="Pro residues" evidence="3">
    <location>
        <begin position="94"/>
        <end position="171"/>
    </location>
</feature>
<feature type="compositionally biased region" description="Basic residues" evidence="3">
    <location>
        <begin position="173"/>
        <end position="187"/>
    </location>
</feature>
<feature type="compositionally biased region" description="Pro residues" evidence="3">
    <location>
        <begin position="189"/>
        <end position="203"/>
    </location>
</feature>
<feature type="lipid moiety-binding region" description="GPI-anchor amidated serine" evidence="2">
    <location>
        <position position="196"/>
    </location>
</feature>
<name>AGP19_ARATH</name>
<comment type="function">
    <text>Proteoglycan that seems to be implicated in diverse developmental roles such as differentiation, cell-cell recognition, embryogenesis and programmed cell death.</text>
</comment>
<comment type="subcellular location">
    <subcellularLocation>
        <location evidence="5">Cell membrane</location>
        <topology evidence="5">Lipid-anchor</topology>
        <topology evidence="5">GPI-anchor</topology>
    </subcellularLocation>
</comment>
<comment type="tissue specificity">
    <text evidence="4">Strongly expressed in stems, moderately expressed in flowers and roots and weakly expressed in young leaves.</text>
</comment>
<comment type="PTM">
    <text evidence="1">O-glycosylated on the hydroxyproline residues.</text>
</comment>
<comment type="similarity">
    <text evidence="5">Belongs to the lysine-rich AGP family.</text>
</comment>
<comment type="sequence caution" evidence="5">
    <conflict type="erroneous gene model prediction">
        <sequence resource="EMBL-CDS" id="AAD49970"/>
    </conflict>
</comment>
<comment type="sequence caution" evidence="5">
    <conflict type="erroneous gene model prediction">
        <sequence resource="EMBL-CDS" id="AAG52045"/>
    </conflict>
</comment>
<proteinExistence type="evidence at transcript level"/>
<gene>
    <name type="primary">AGP19</name>
    <name type="ordered locus">At1g68725</name>
    <name type="ORF">F14K14.17</name>
    <name type="ORF">F24J5.4</name>
</gene>
<keyword id="KW-1003">Cell membrane</keyword>
<keyword id="KW-0325">Glycoprotein</keyword>
<keyword id="KW-0336">GPI-anchor</keyword>
<keyword id="KW-0449">Lipoprotein</keyword>
<keyword id="KW-0472">Membrane</keyword>
<keyword id="KW-0654">Proteoglycan</keyword>
<keyword id="KW-1185">Reference proteome</keyword>
<keyword id="KW-0732">Signal</keyword>
<evidence type="ECO:0000250" key="1"/>
<evidence type="ECO:0000255" key="2"/>
<evidence type="ECO:0000256" key="3">
    <source>
        <dbReference type="SAM" id="MobiDB-lite"/>
    </source>
</evidence>
<evidence type="ECO:0000269" key="4">
    <source>
    </source>
</evidence>
<evidence type="ECO:0000305" key="5"/>
<sequence length="248" mass="24484">MESNSIIWSLLLASALISSFSVNAQGPAASPVTSTTTAPPPTTAAPPTTAAPPPTTTTPPVSAAQPPASPVTPPPAVTPTSPPAPKVAPVISPATPPPQPPQSPPASAPTVSPPPVSPPPAPTSPPPTPASPPPAPASPPPAPASPPPAPVSPPPVQAPSPISLPPAPAPAPTKHKRKHKHKRHHHAPAPAPIPPSPPSPPVLTDPQDTAPAPSPNTNGGNALNQLKGRAVMWLNTGLVILFLLAMTA</sequence>
<reference key="1">
    <citation type="journal article" date="2000" name="Nature">
        <title>Sequence and analysis of chromosome 1 of the plant Arabidopsis thaliana.</title>
        <authorList>
            <person name="Theologis A."/>
            <person name="Ecker J.R."/>
            <person name="Palm C.J."/>
            <person name="Federspiel N.A."/>
            <person name="Kaul S."/>
            <person name="White O."/>
            <person name="Alonso J."/>
            <person name="Altafi H."/>
            <person name="Araujo R."/>
            <person name="Bowman C.L."/>
            <person name="Brooks S.Y."/>
            <person name="Buehler E."/>
            <person name="Chan A."/>
            <person name="Chao Q."/>
            <person name="Chen H."/>
            <person name="Cheuk R.F."/>
            <person name="Chin C.W."/>
            <person name="Chung M.K."/>
            <person name="Conn L."/>
            <person name="Conway A.B."/>
            <person name="Conway A.R."/>
            <person name="Creasy T.H."/>
            <person name="Dewar K."/>
            <person name="Dunn P."/>
            <person name="Etgu P."/>
            <person name="Feldblyum T.V."/>
            <person name="Feng J.-D."/>
            <person name="Fong B."/>
            <person name="Fujii C.Y."/>
            <person name="Gill J.E."/>
            <person name="Goldsmith A.D."/>
            <person name="Haas B."/>
            <person name="Hansen N.F."/>
            <person name="Hughes B."/>
            <person name="Huizar L."/>
            <person name="Hunter J.L."/>
            <person name="Jenkins J."/>
            <person name="Johnson-Hopson C."/>
            <person name="Khan S."/>
            <person name="Khaykin E."/>
            <person name="Kim C.J."/>
            <person name="Koo H.L."/>
            <person name="Kremenetskaia I."/>
            <person name="Kurtz D.B."/>
            <person name="Kwan A."/>
            <person name="Lam B."/>
            <person name="Langin-Hooper S."/>
            <person name="Lee A."/>
            <person name="Lee J.M."/>
            <person name="Lenz C.A."/>
            <person name="Li J.H."/>
            <person name="Li Y.-P."/>
            <person name="Lin X."/>
            <person name="Liu S.X."/>
            <person name="Liu Z.A."/>
            <person name="Luros J.S."/>
            <person name="Maiti R."/>
            <person name="Marziali A."/>
            <person name="Militscher J."/>
            <person name="Miranda M."/>
            <person name="Nguyen M."/>
            <person name="Nierman W.C."/>
            <person name="Osborne B.I."/>
            <person name="Pai G."/>
            <person name="Peterson J."/>
            <person name="Pham P.K."/>
            <person name="Rizzo M."/>
            <person name="Rooney T."/>
            <person name="Rowley D."/>
            <person name="Sakano H."/>
            <person name="Salzberg S.L."/>
            <person name="Schwartz J.R."/>
            <person name="Shinn P."/>
            <person name="Southwick A.M."/>
            <person name="Sun H."/>
            <person name="Tallon L.J."/>
            <person name="Tambunga G."/>
            <person name="Toriumi M.J."/>
            <person name="Town C.D."/>
            <person name="Utterback T."/>
            <person name="Van Aken S."/>
            <person name="Vaysberg M."/>
            <person name="Vysotskaia V.S."/>
            <person name="Walker M."/>
            <person name="Wu D."/>
            <person name="Yu G."/>
            <person name="Fraser C.M."/>
            <person name="Venter J.C."/>
            <person name="Davis R.W."/>
        </authorList>
    </citation>
    <scope>NUCLEOTIDE SEQUENCE [LARGE SCALE GENOMIC DNA]</scope>
    <source>
        <strain>cv. Columbia</strain>
    </source>
</reference>
<reference key="2">
    <citation type="journal article" date="2017" name="Plant J.">
        <title>Araport11: a complete reannotation of the Arabidopsis thaliana reference genome.</title>
        <authorList>
            <person name="Cheng C.Y."/>
            <person name="Krishnakumar V."/>
            <person name="Chan A.P."/>
            <person name="Thibaud-Nissen F."/>
            <person name="Schobel S."/>
            <person name="Town C.D."/>
        </authorList>
    </citation>
    <scope>GENOME REANNOTATION</scope>
    <source>
        <strain>cv. Columbia</strain>
    </source>
</reference>
<reference key="3">
    <citation type="journal article" date="2002" name="Plant Physiol.">
        <title>Using genomic resources to guide research directions. The arabinogalactan protein gene family as a test case.</title>
        <authorList>
            <person name="Schultz C.J."/>
            <person name="Rumsewicz M.P."/>
            <person name="Johnson K.L."/>
            <person name="Jones B.J."/>
            <person name="Gaspar Y.M."/>
            <person name="Bacic A."/>
        </authorList>
    </citation>
    <scope>GENE FAMILY</scope>
    <scope>NOMENCLATURE</scope>
</reference>
<reference key="4">
    <citation type="journal article" date="2005" name="Plant Cell Physiol.">
        <title>The lysine-rich arabinogalactan-protein subfamily in Arabidopsis: gene expression, glycoprotein purification and biochemical characterization.</title>
        <authorList>
            <person name="Sun W."/>
            <person name="Xu J."/>
            <person name="Yang J."/>
            <person name="Kieliszewski M.J."/>
            <person name="Showalter A.M."/>
        </authorList>
    </citation>
    <scope>TISSUE SPECIFICITY</scope>
</reference>
<dbReference type="EMBL" id="AC008075">
    <property type="protein sequence ID" value="AAD49970.1"/>
    <property type="status" value="ALT_SEQ"/>
    <property type="molecule type" value="Genomic_DNA"/>
</dbReference>
<dbReference type="EMBL" id="AC011914">
    <property type="protein sequence ID" value="AAG52045.1"/>
    <property type="status" value="ALT_SEQ"/>
    <property type="molecule type" value="Genomic_DNA"/>
</dbReference>
<dbReference type="EMBL" id="CP002684">
    <property type="protein sequence ID" value="AEE34832.1"/>
    <property type="molecule type" value="Genomic_DNA"/>
</dbReference>
<dbReference type="PIR" id="H96711">
    <property type="entry name" value="H96711"/>
</dbReference>
<dbReference type="RefSeq" id="NP_177041.3">
    <property type="nucleotide sequence ID" value="NM_105546.3"/>
</dbReference>
<dbReference type="STRING" id="3702.Q9S740"/>
<dbReference type="GlyGen" id="Q9S740">
    <property type="glycosylation" value="6 sites"/>
</dbReference>
<dbReference type="PaxDb" id="3702-AT1G68725.1"/>
<dbReference type="EnsemblPlants" id="AT1G68725.1">
    <property type="protein sequence ID" value="AT1G68725.1"/>
    <property type="gene ID" value="AT1G68725"/>
</dbReference>
<dbReference type="GeneID" id="843203"/>
<dbReference type="Gramene" id="AT1G68725.1">
    <property type="protein sequence ID" value="AT1G68725.1"/>
    <property type="gene ID" value="AT1G68725"/>
</dbReference>
<dbReference type="KEGG" id="ath:AT1G68725"/>
<dbReference type="Araport" id="AT1G68725"/>
<dbReference type="TAIR" id="AT1G68725">
    <property type="gene designation" value="AGP19"/>
</dbReference>
<dbReference type="eggNOG" id="ENOG502S0NY">
    <property type="taxonomic scope" value="Eukaryota"/>
</dbReference>
<dbReference type="HOGENOM" id="CLU_083753_0_0_1"/>
<dbReference type="InParanoid" id="Q9S740"/>
<dbReference type="OMA" id="CPYNTVP"/>
<dbReference type="PRO" id="PR:Q9S740"/>
<dbReference type="Proteomes" id="UP000006548">
    <property type="component" value="Chromosome 1"/>
</dbReference>
<dbReference type="ExpressionAtlas" id="Q9S740">
    <property type="expression patterns" value="baseline and differential"/>
</dbReference>
<dbReference type="GO" id="GO:0005886">
    <property type="term" value="C:plasma membrane"/>
    <property type="evidence" value="ECO:0007669"/>
    <property type="project" value="UniProtKB-SubCell"/>
</dbReference>
<dbReference type="GO" id="GO:0098552">
    <property type="term" value="C:side of membrane"/>
    <property type="evidence" value="ECO:0007669"/>
    <property type="project" value="UniProtKB-KW"/>
</dbReference>
<dbReference type="InterPro" id="IPR038793">
    <property type="entry name" value="AGP19"/>
</dbReference>
<dbReference type="PANTHER" id="PTHR36549">
    <property type="entry name" value="LYSINE-RICH ARABINOGALACTAN PROTEIN 19"/>
    <property type="match status" value="1"/>
</dbReference>
<dbReference type="PANTHER" id="PTHR36549:SF3">
    <property type="entry name" value="LYSINE-RICH ARABINOGALACTAN PROTEIN 19"/>
    <property type="match status" value="1"/>
</dbReference>
<protein>
    <recommendedName>
        <fullName>Lysine-rich arabinogalactan protein 19</fullName>
        <shortName>Lys-rich AGP 19</shortName>
    </recommendedName>
</protein>
<accession>Q9S740</accession>
<accession>F4HYX4</accession>